<keyword id="KW-0285">Flavoprotein</keyword>
<keyword id="KW-0288">FMN</keyword>
<keyword id="KW-0520">NAD</keyword>
<keyword id="KW-0521">NADP</keyword>
<keyword id="KW-0547">Nucleotide-binding</keyword>
<keyword id="KW-0560">Oxidoreductase</keyword>
<keyword id="KW-1185">Reference proteome</keyword>
<feature type="chain" id="PRO_1000200639" description="NAD(P)H dehydrogenase (quinone)">
    <location>
        <begin position="1"/>
        <end position="200"/>
    </location>
</feature>
<feature type="domain" description="Flavodoxin-like" evidence="1">
    <location>
        <begin position="4"/>
        <end position="191"/>
    </location>
</feature>
<feature type="binding site" evidence="1">
    <location>
        <begin position="10"/>
        <end position="15"/>
    </location>
    <ligand>
        <name>FMN</name>
        <dbReference type="ChEBI" id="CHEBI:58210"/>
    </ligand>
</feature>
<feature type="binding site" evidence="1">
    <location>
        <position position="12"/>
    </location>
    <ligand>
        <name>NAD(+)</name>
        <dbReference type="ChEBI" id="CHEBI:57540"/>
    </ligand>
</feature>
<feature type="binding site" evidence="1">
    <location>
        <begin position="79"/>
        <end position="81"/>
    </location>
    <ligand>
        <name>FMN</name>
        <dbReference type="ChEBI" id="CHEBI:58210"/>
    </ligand>
</feature>
<feature type="binding site" evidence="1">
    <location>
        <position position="99"/>
    </location>
    <ligand>
        <name>substrate</name>
    </ligand>
</feature>
<feature type="binding site" evidence="1">
    <location>
        <begin position="114"/>
        <end position="120"/>
    </location>
    <ligand>
        <name>FMN</name>
        <dbReference type="ChEBI" id="CHEBI:58210"/>
    </ligand>
</feature>
<feature type="binding site" evidence="1">
    <location>
        <position position="135"/>
    </location>
    <ligand>
        <name>FMN</name>
        <dbReference type="ChEBI" id="CHEBI:58210"/>
    </ligand>
</feature>
<organism>
    <name type="scientific">Rhodospirillum centenum (strain ATCC 51521 / SW)</name>
    <dbReference type="NCBI Taxonomy" id="414684"/>
    <lineage>
        <taxon>Bacteria</taxon>
        <taxon>Pseudomonadati</taxon>
        <taxon>Pseudomonadota</taxon>
        <taxon>Alphaproteobacteria</taxon>
        <taxon>Rhodospirillales</taxon>
        <taxon>Rhodospirillaceae</taxon>
        <taxon>Rhodospirillum</taxon>
    </lineage>
</organism>
<evidence type="ECO:0000255" key="1">
    <source>
        <dbReference type="HAMAP-Rule" id="MF_01017"/>
    </source>
</evidence>
<proteinExistence type="inferred from homology"/>
<comment type="catalytic activity">
    <reaction evidence="1">
        <text>a quinone + NADH + H(+) = a quinol + NAD(+)</text>
        <dbReference type="Rhea" id="RHEA:46160"/>
        <dbReference type="ChEBI" id="CHEBI:15378"/>
        <dbReference type="ChEBI" id="CHEBI:24646"/>
        <dbReference type="ChEBI" id="CHEBI:57540"/>
        <dbReference type="ChEBI" id="CHEBI:57945"/>
        <dbReference type="ChEBI" id="CHEBI:132124"/>
        <dbReference type="EC" id="1.6.5.2"/>
    </reaction>
</comment>
<comment type="catalytic activity">
    <reaction evidence="1">
        <text>a quinone + NADPH + H(+) = a quinol + NADP(+)</text>
        <dbReference type="Rhea" id="RHEA:46164"/>
        <dbReference type="ChEBI" id="CHEBI:15378"/>
        <dbReference type="ChEBI" id="CHEBI:24646"/>
        <dbReference type="ChEBI" id="CHEBI:57783"/>
        <dbReference type="ChEBI" id="CHEBI:58349"/>
        <dbReference type="ChEBI" id="CHEBI:132124"/>
        <dbReference type="EC" id="1.6.5.2"/>
    </reaction>
</comment>
<comment type="cofactor">
    <cofactor evidence="1">
        <name>FMN</name>
        <dbReference type="ChEBI" id="CHEBI:58210"/>
    </cofactor>
    <text evidence="1">Binds 1 FMN per monomer.</text>
</comment>
<comment type="similarity">
    <text evidence="1">Belongs to the WrbA family.</text>
</comment>
<gene>
    <name type="ordered locus">RC1_1936</name>
</gene>
<accession>B6ITN1</accession>
<dbReference type="EC" id="1.6.5.2" evidence="1"/>
<dbReference type="EMBL" id="CP000613">
    <property type="protein sequence ID" value="ACI99332.1"/>
    <property type="molecule type" value="Genomic_DNA"/>
</dbReference>
<dbReference type="RefSeq" id="WP_012567117.1">
    <property type="nucleotide sequence ID" value="NC_011420.2"/>
</dbReference>
<dbReference type="SMR" id="B6ITN1"/>
<dbReference type="STRING" id="414684.RC1_1936"/>
<dbReference type="KEGG" id="rce:RC1_1936"/>
<dbReference type="eggNOG" id="COG0655">
    <property type="taxonomic scope" value="Bacteria"/>
</dbReference>
<dbReference type="HOGENOM" id="CLU_051402_0_2_5"/>
<dbReference type="OrthoDB" id="9801479at2"/>
<dbReference type="Proteomes" id="UP000001591">
    <property type="component" value="Chromosome"/>
</dbReference>
<dbReference type="GO" id="GO:0016020">
    <property type="term" value="C:membrane"/>
    <property type="evidence" value="ECO:0007669"/>
    <property type="project" value="TreeGrafter"/>
</dbReference>
<dbReference type="GO" id="GO:0050660">
    <property type="term" value="F:flavin adenine dinucleotide binding"/>
    <property type="evidence" value="ECO:0007669"/>
    <property type="project" value="UniProtKB-UniRule"/>
</dbReference>
<dbReference type="GO" id="GO:0010181">
    <property type="term" value="F:FMN binding"/>
    <property type="evidence" value="ECO:0007669"/>
    <property type="project" value="InterPro"/>
</dbReference>
<dbReference type="GO" id="GO:0051287">
    <property type="term" value="F:NAD binding"/>
    <property type="evidence" value="ECO:0007669"/>
    <property type="project" value="UniProtKB-UniRule"/>
</dbReference>
<dbReference type="GO" id="GO:0050136">
    <property type="term" value="F:NADH:ubiquinone reductase (non-electrogenic) activity"/>
    <property type="evidence" value="ECO:0007669"/>
    <property type="project" value="RHEA"/>
</dbReference>
<dbReference type="GO" id="GO:0050661">
    <property type="term" value="F:NADP binding"/>
    <property type="evidence" value="ECO:0007669"/>
    <property type="project" value="UniProtKB-UniRule"/>
</dbReference>
<dbReference type="GO" id="GO:0008753">
    <property type="term" value="F:NADPH dehydrogenase (quinone) activity"/>
    <property type="evidence" value="ECO:0007669"/>
    <property type="project" value="RHEA"/>
</dbReference>
<dbReference type="FunFam" id="3.40.50.360:FF:000001">
    <property type="entry name" value="NAD(P)H dehydrogenase (Quinone) FQR1-like"/>
    <property type="match status" value="1"/>
</dbReference>
<dbReference type="Gene3D" id="3.40.50.360">
    <property type="match status" value="1"/>
</dbReference>
<dbReference type="HAMAP" id="MF_01017">
    <property type="entry name" value="NQOR"/>
    <property type="match status" value="1"/>
</dbReference>
<dbReference type="InterPro" id="IPR008254">
    <property type="entry name" value="Flavodoxin/NO_synth"/>
</dbReference>
<dbReference type="InterPro" id="IPR029039">
    <property type="entry name" value="Flavoprotein-like_sf"/>
</dbReference>
<dbReference type="InterPro" id="IPR010089">
    <property type="entry name" value="Flavoprotein_WrbA-like"/>
</dbReference>
<dbReference type="InterPro" id="IPR005025">
    <property type="entry name" value="FMN_Rdtase-like_dom"/>
</dbReference>
<dbReference type="InterPro" id="IPR037513">
    <property type="entry name" value="NQO"/>
</dbReference>
<dbReference type="NCBIfam" id="TIGR01755">
    <property type="entry name" value="flav_wrbA"/>
    <property type="match status" value="1"/>
</dbReference>
<dbReference type="NCBIfam" id="NF002999">
    <property type="entry name" value="PRK03767.1"/>
    <property type="match status" value="1"/>
</dbReference>
<dbReference type="PANTHER" id="PTHR30546">
    <property type="entry name" value="FLAVODOXIN-RELATED PROTEIN WRBA-RELATED"/>
    <property type="match status" value="1"/>
</dbReference>
<dbReference type="PANTHER" id="PTHR30546:SF23">
    <property type="entry name" value="FLAVOPROTEIN-LIKE PROTEIN YCP4-RELATED"/>
    <property type="match status" value="1"/>
</dbReference>
<dbReference type="Pfam" id="PF03358">
    <property type="entry name" value="FMN_red"/>
    <property type="match status" value="1"/>
</dbReference>
<dbReference type="SUPFAM" id="SSF52218">
    <property type="entry name" value="Flavoproteins"/>
    <property type="match status" value="1"/>
</dbReference>
<dbReference type="PROSITE" id="PS50902">
    <property type="entry name" value="FLAVODOXIN_LIKE"/>
    <property type="match status" value="1"/>
</dbReference>
<reference key="1">
    <citation type="submission" date="2007-03" db="EMBL/GenBank/DDBJ databases">
        <title>Genome sequence of Rhodospirillum centenum.</title>
        <authorList>
            <person name="Touchman J.W."/>
            <person name="Bauer C."/>
            <person name="Blankenship R.E."/>
        </authorList>
    </citation>
    <scope>NUCLEOTIDE SEQUENCE [LARGE SCALE GENOMIC DNA]</scope>
    <source>
        <strain>ATCC 51521 / SW</strain>
    </source>
</reference>
<sequence>MTKVLVLYYSSYGHIETMAQAVAEGARSVPGTEVAVKRVPELVPEEVARNAGMKLDQPAPVATVAELAEYDAIIVGSPTRFGRMTSQMANFLDQTGGLWAKGALNGKVGAAFTSTASQHGGQETTLFSILTNLLHHGMVVVGLPYSYEGLSGVEQVKGGTPYGASTIADGDGSRRPTEVELGGARYQGALVARTAAKLRG</sequence>
<protein>
    <recommendedName>
        <fullName evidence="1">NAD(P)H dehydrogenase (quinone)</fullName>
        <ecNumber evidence="1">1.6.5.2</ecNumber>
    </recommendedName>
    <alternativeName>
        <fullName>Flavoprotein WrbA</fullName>
    </alternativeName>
    <alternativeName>
        <fullName evidence="1">NAD(P)H:quinone oxidoreductase</fullName>
        <shortName evidence="1">NQO</shortName>
    </alternativeName>
</protein>
<name>NQOR_RHOCS</name>